<proteinExistence type="evidence at protein level"/>
<keyword id="KW-0927">Auxin signaling pathway</keyword>
<keyword id="KW-1003">Cell membrane</keyword>
<keyword id="KW-0963">Cytoplasm</keyword>
<keyword id="KW-0342">GTP-binding</keyword>
<keyword id="KW-0449">Lipoprotein</keyword>
<keyword id="KW-0472">Membrane</keyword>
<keyword id="KW-0488">Methylation</keyword>
<keyword id="KW-0547">Nucleotide-binding</keyword>
<keyword id="KW-0564">Palmitate</keyword>
<keyword id="KW-0636">Prenylation</keyword>
<keyword id="KW-1185">Reference proteome</keyword>
<feature type="chain" id="PRO_0000198917" description="Rac-like GTP-binding protein ARAC3">
    <location>
        <begin position="1"/>
        <end position="195"/>
    </location>
</feature>
<feature type="propeptide" id="PRO_0000227582" description="Removed in mature form" evidence="5">
    <location>
        <begin position="196"/>
        <end position="198"/>
    </location>
</feature>
<feature type="short sequence motif" description="Effector region" evidence="5">
    <location>
        <begin position="35"/>
        <end position="43"/>
    </location>
</feature>
<feature type="binding site" evidence="1">
    <location>
        <begin position="13"/>
        <end position="21"/>
    </location>
    <ligand>
        <name>GTP</name>
        <dbReference type="ChEBI" id="CHEBI:37565"/>
    </ligand>
</feature>
<feature type="binding site" evidence="4">
    <location>
        <begin position="31"/>
        <end position="38"/>
    </location>
    <ligand>
        <name>GTP</name>
        <dbReference type="ChEBI" id="CHEBI:37565"/>
    </ligand>
</feature>
<feature type="binding site" evidence="4">
    <location>
        <begin position="60"/>
        <end position="64"/>
    </location>
    <ligand>
        <name>GTP</name>
        <dbReference type="ChEBI" id="CHEBI:37565"/>
    </ligand>
</feature>
<feature type="binding site" evidence="1">
    <location>
        <begin position="118"/>
        <end position="121"/>
    </location>
    <ligand>
        <name>GTP</name>
        <dbReference type="ChEBI" id="CHEBI:37565"/>
    </ligand>
</feature>
<feature type="modified residue" description="Cysteine methyl ester" evidence="5">
    <location>
        <position position="195"/>
    </location>
</feature>
<feature type="lipid moiety-binding region" description="S-palmitoyl cysteine" evidence="5">
    <location>
        <position position="158"/>
    </location>
</feature>
<feature type="lipid moiety-binding region" description="S-geranylgeranyl cysteine" evidence="5">
    <location>
        <position position="195"/>
    </location>
</feature>
<feature type="sequence conflict" description="In Ref. 1; AAB38780." evidence="17" ref="1">
    <original>D</original>
    <variation>H</variation>
    <location>
        <position position="124"/>
    </location>
</feature>
<feature type="sequence conflict" description="In Ref. 7; AAO42256." evidence="17" ref="7">
    <original>V</original>
    <variation>M</variation>
    <location>
        <position position="169"/>
    </location>
</feature>
<dbReference type="EMBL" id="U62746">
    <property type="protein sequence ID" value="AAB38780.1"/>
    <property type="molecule type" value="mRNA"/>
</dbReference>
<dbReference type="EMBL" id="U43501">
    <property type="protein sequence ID" value="AAC49853.1"/>
    <property type="molecule type" value="Genomic_DNA"/>
</dbReference>
<dbReference type="EMBL" id="AF031427">
    <property type="protein sequence ID" value="AAC78241.1"/>
    <property type="molecule type" value="mRNA"/>
</dbReference>
<dbReference type="EMBL" id="AF115470">
    <property type="protein sequence ID" value="AAF40242.1"/>
    <property type="molecule type" value="Genomic_DNA"/>
</dbReference>
<dbReference type="EMBL" id="AL022023">
    <property type="protein sequence ID" value="CAA17767.1"/>
    <property type="molecule type" value="Genomic_DNA"/>
</dbReference>
<dbReference type="EMBL" id="AL161586">
    <property type="protein sequence ID" value="CAB80219.1"/>
    <property type="molecule type" value="Genomic_DNA"/>
</dbReference>
<dbReference type="EMBL" id="CP002687">
    <property type="protein sequence ID" value="AEE86447.1"/>
    <property type="molecule type" value="Genomic_DNA"/>
</dbReference>
<dbReference type="EMBL" id="CP002687">
    <property type="protein sequence ID" value="AEE86448.1"/>
    <property type="molecule type" value="Genomic_DNA"/>
</dbReference>
<dbReference type="EMBL" id="CP002687">
    <property type="protein sequence ID" value="AEE86449.1"/>
    <property type="molecule type" value="Genomic_DNA"/>
</dbReference>
<dbReference type="EMBL" id="BT004252">
    <property type="protein sequence ID" value="AAO42256.1"/>
    <property type="molecule type" value="mRNA"/>
</dbReference>
<dbReference type="PIR" id="T05772">
    <property type="entry name" value="T05772"/>
</dbReference>
<dbReference type="RefSeq" id="NP_001190916.1">
    <property type="nucleotide sequence ID" value="NM_001203987.1"/>
</dbReference>
<dbReference type="RefSeq" id="NP_001190917.1">
    <property type="nucleotide sequence ID" value="NM_001203988.2"/>
</dbReference>
<dbReference type="RefSeq" id="NP_195228.1">
    <property type="nucleotide sequence ID" value="NM_119668.6"/>
</dbReference>
<dbReference type="SMR" id="Q38912"/>
<dbReference type="BioGRID" id="14936">
    <property type="interactions" value="9"/>
</dbReference>
<dbReference type="DIP" id="DIP-29822N"/>
<dbReference type="FunCoup" id="Q38912">
    <property type="interactions" value="3351"/>
</dbReference>
<dbReference type="IntAct" id="Q38912">
    <property type="interactions" value="2"/>
</dbReference>
<dbReference type="STRING" id="3702.Q38912"/>
<dbReference type="SwissPalm" id="Q38912"/>
<dbReference type="PaxDb" id="3702-AT4G35020.2"/>
<dbReference type="ProteomicsDB" id="236297"/>
<dbReference type="EnsemblPlants" id="AT4G35020.1">
    <property type="protein sequence ID" value="AT4G35020.1"/>
    <property type="gene ID" value="AT4G35020"/>
</dbReference>
<dbReference type="EnsemblPlants" id="AT4G35020.2">
    <property type="protein sequence ID" value="AT4G35020.2"/>
    <property type="gene ID" value="AT4G35020"/>
</dbReference>
<dbReference type="EnsemblPlants" id="AT4G35020.3">
    <property type="protein sequence ID" value="AT4G35020.3"/>
    <property type="gene ID" value="AT4G35020"/>
</dbReference>
<dbReference type="GeneID" id="829654"/>
<dbReference type="Gramene" id="AT4G35020.1">
    <property type="protein sequence ID" value="AT4G35020.1"/>
    <property type="gene ID" value="AT4G35020"/>
</dbReference>
<dbReference type="Gramene" id="AT4G35020.2">
    <property type="protein sequence ID" value="AT4G35020.2"/>
    <property type="gene ID" value="AT4G35020"/>
</dbReference>
<dbReference type="Gramene" id="AT4G35020.3">
    <property type="protein sequence ID" value="AT4G35020.3"/>
    <property type="gene ID" value="AT4G35020"/>
</dbReference>
<dbReference type="KEGG" id="ath:AT4G35020"/>
<dbReference type="Araport" id="AT4G35020"/>
<dbReference type="TAIR" id="AT4G35020">
    <property type="gene designation" value="RAC3"/>
</dbReference>
<dbReference type="eggNOG" id="KOG0393">
    <property type="taxonomic scope" value="Eukaryota"/>
</dbReference>
<dbReference type="HOGENOM" id="CLU_041217_21_3_1"/>
<dbReference type="InParanoid" id="Q38912"/>
<dbReference type="OMA" id="ECSAFTH"/>
<dbReference type="OrthoDB" id="8830751at2759"/>
<dbReference type="PhylomeDB" id="Q38912"/>
<dbReference type="BioCyc" id="ARA:AT4G35020-MONOMER"/>
<dbReference type="PRO" id="PR:Q38912"/>
<dbReference type="Proteomes" id="UP000006548">
    <property type="component" value="Chromosome 4"/>
</dbReference>
<dbReference type="ExpressionAtlas" id="Q38912">
    <property type="expression patterns" value="baseline and differential"/>
</dbReference>
<dbReference type="GO" id="GO:0005737">
    <property type="term" value="C:cytoplasm"/>
    <property type="evidence" value="ECO:0007005"/>
    <property type="project" value="TAIR"/>
</dbReference>
<dbReference type="GO" id="GO:0005730">
    <property type="term" value="C:nucleolus"/>
    <property type="evidence" value="ECO:0007005"/>
    <property type="project" value="TAIR"/>
</dbReference>
<dbReference type="GO" id="GO:0005634">
    <property type="term" value="C:nucleus"/>
    <property type="evidence" value="ECO:0007005"/>
    <property type="project" value="TAIR"/>
</dbReference>
<dbReference type="GO" id="GO:0005886">
    <property type="term" value="C:plasma membrane"/>
    <property type="evidence" value="ECO:0000314"/>
    <property type="project" value="UniProtKB"/>
</dbReference>
<dbReference type="GO" id="GO:0030427">
    <property type="term" value="C:site of polarized growth"/>
    <property type="evidence" value="ECO:0000314"/>
    <property type="project" value="TAIR"/>
</dbReference>
<dbReference type="GO" id="GO:0005819">
    <property type="term" value="C:spindle"/>
    <property type="evidence" value="ECO:0007005"/>
    <property type="project" value="TAIR"/>
</dbReference>
<dbReference type="GO" id="GO:0019003">
    <property type="term" value="F:GDP binding"/>
    <property type="evidence" value="ECO:0000314"/>
    <property type="project" value="TAIR"/>
</dbReference>
<dbReference type="GO" id="GO:0005525">
    <property type="term" value="F:GTP binding"/>
    <property type="evidence" value="ECO:0000314"/>
    <property type="project" value="TAIR"/>
</dbReference>
<dbReference type="GO" id="GO:0003924">
    <property type="term" value="F:GTPase activity"/>
    <property type="evidence" value="ECO:0000314"/>
    <property type="project" value="TAIR"/>
</dbReference>
<dbReference type="GO" id="GO:0051211">
    <property type="term" value="P:anisotropic cell growth"/>
    <property type="evidence" value="ECO:0000315"/>
    <property type="project" value="UniProtKB"/>
</dbReference>
<dbReference type="GO" id="GO:0009734">
    <property type="term" value="P:auxin-activated signaling pathway"/>
    <property type="evidence" value="ECO:0007669"/>
    <property type="project" value="UniProtKB-KW"/>
</dbReference>
<dbReference type="GO" id="GO:0043622">
    <property type="term" value="P:cortical microtubule organization"/>
    <property type="evidence" value="ECO:0000315"/>
    <property type="project" value="UniProtKB"/>
</dbReference>
<dbReference type="GO" id="GO:0048446">
    <property type="term" value="P:petal morphogenesis"/>
    <property type="evidence" value="ECO:0000315"/>
    <property type="project" value="UniProtKB"/>
</dbReference>
<dbReference type="GO" id="GO:0009958">
    <property type="term" value="P:positive gravitropism"/>
    <property type="evidence" value="ECO:0000315"/>
    <property type="project" value="UniProtKB"/>
</dbReference>
<dbReference type="GO" id="GO:0010928">
    <property type="term" value="P:regulation of auxin mediated signaling pathway"/>
    <property type="evidence" value="ECO:0000315"/>
    <property type="project" value="UniProtKB"/>
</dbReference>
<dbReference type="GO" id="GO:0048767">
    <property type="term" value="P:root hair elongation"/>
    <property type="evidence" value="ECO:0000315"/>
    <property type="project" value="UniProtKB"/>
</dbReference>
<dbReference type="GO" id="GO:0048766">
    <property type="term" value="P:root hair initiation"/>
    <property type="evidence" value="ECO:0000315"/>
    <property type="project" value="UniProtKB"/>
</dbReference>
<dbReference type="GO" id="GO:0007264">
    <property type="term" value="P:small GTPase-mediated signal transduction"/>
    <property type="evidence" value="ECO:0007669"/>
    <property type="project" value="InterPro"/>
</dbReference>
<dbReference type="CDD" id="cd04133">
    <property type="entry name" value="Rop_like"/>
    <property type="match status" value="1"/>
</dbReference>
<dbReference type="FunFam" id="3.40.50.300:FF:000535">
    <property type="entry name" value="rac-like GTP-binding protein RAC2"/>
    <property type="match status" value="1"/>
</dbReference>
<dbReference type="Gene3D" id="3.40.50.300">
    <property type="entry name" value="P-loop containing nucleotide triphosphate hydrolases"/>
    <property type="match status" value="1"/>
</dbReference>
<dbReference type="InterPro" id="IPR027417">
    <property type="entry name" value="P-loop_NTPase"/>
</dbReference>
<dbReference type="InterPro" id="IPR005225">
    <property type="entry name" value="Small_GTP-bd"/>
</dbReference>
<dbReference type="InterPro" id="IPR001806">
    <property type="entry name" value="Small_GTPase"/>
</dbReference>
<dbReference type="InterPro" id="IPR003578">
    <property type="entry name" value="Small_GTPase_Rho"/>
</dbReference>
<dbReference type="NCBIfam" id="TIGR00231">
    <property type="entry name" value="small_GTP"/>
    <property type="match status" value="1"/>
</dbReference>
<dbReference type="PANTHER" id="PTHR24072">
    <property type="entry name" value="RHO FAMILY GTPASE"/>
    <property type="match status" value="1"/>
</dbReference>
<dbReference type="Pfam" id="PF00071">
    <property type="entry name" value="Ras"/>
    <property type="match status" value="1"/>
</dbReference>
<dbReference type="PRINTS" id="PR00449">
    <property type="entry name" value="RASTRNSFRMNG"/>
</dbReference>
<dbReference type="SMART" id="SM00175">
    <property type="entry name" value="RAB"/>
    <property type="match status" value="1"/>
</dbReference>
<dbReference type="SMART" id="SM00173">
    <property type="entry name" value="RAS"/>
    <property type="match status" value="1"/>
</dbReference>
<dbReference type="SMART" id="SM00174">
    <property type="entry name" value="RHO"/>
    <property type="match status" value="1"/>
</dbReference>
<dbReference type="SUPFAM" id="SSF52540">
    <property type="entry name" value="P-loop containing nucleoside triphosphate hydrolases"/>
    <property type="match status" value="1"/>
</dbReference>
<dbReference type="PROSITE" id="PS51420">
    <property type="entry name" value="RHO"/>
    <property type="match status" value="1"/>
</dbReference>
<reference key="1">
    <citation type="journal article" date="1996" name="Plant J.">
        <title>Identification of plant cytoskeletal, cell cycle-related and polarity-related proteins using Schizosaccharomyces pombe.</title>
        <authorList>
            <person name="Xia G."/>
            <person name="Ramachandran S."/>
            <person name="Hong Y."/>
            <person name="Chan Y.-S."/>
            <person name="Simanis V."/>
            <person name="Chua N.-H."/>
        </authorList>
    </citation>
    <scope>NUCLEOTIDE SEQUENCE [MRNA]</scope>
</reference>
<reference key="2">
    <citation type="journal article" date="1997" name="Plant Mol. Biol.">
        <title>Cloning and characterization of rac-like cDNAs from Arabidopsis thaliana.</title>
        <authorList>
            <person name="Winge P."/>
            <person name="Brembu T."/>
            <person name="Bones A.M."/>
        </authorList>
    </citation>
    <scope>NUCLEOTIDE SEQUENCE [MRNA]</scope>
    <source>
        <strain>cv. Columbia</strain>
    </source>
</reference>
<reference key="3">
    <citation type="journal article" date="1998" name="Plant Physiol.">
        <title>Arabidopsis Rho-related GTPases: differential gene expression in pollen and polar localization in fission yeast.</title>
        <authorList>
            <person name="Li H."/>
            <person name="Wu G."/>
            <person name="Ware D."/>
            <person name="Davis K.R."/>
            <person name="Yang Z."/>
        </authorList>
    </citation>
    <scope>NUCLEOTIDE SEQUENCE [MRNA]</scope>
    <scope>TISSUE SPECIFICITY</scope>
    <source>
        <strain>cv. Columbia</strain>
    </source>
</reference>
<reference key="4">
    <citation type="journal article" date="2000" name="Genetics">
        <title>Genetic structure and evolution of RAC-GTPases in Arabidopsis thaliana.</title>
        <authorList>
            <person name="Winge P."/>
            <person name="Brembu T."/>
            <person name="Kristensen R."/>
            <person name="Bones A.M."/>
        </authorList>
    </citation>
    <scope>NUCLEOTIDE SEQUENCE [GENOMIC DNA]</scope>
    <source>
        <strain>cv. Landsberg erecta</strain>
    </source>
</reference>
<reference key="5">
    <citation type="journal article" date="1999" name="Nature">
        <title>Sequence and analysis of chromosome 4 of the plant Arabidopsis thaliana.</title>
        <authorList>
            <person name="Mayer K.F.X."/>
            <person name="Schueller C."/>
            <person name="Wambutt R."/>
            <person name="Murphy G."/>
            <person name="Volckaert G."/>
            <person name="Pohl T."/>
            <person name="Duesterhoeft A."/>
            <person name="Stiekema W."/>
            <person name="Entian K.-D."/>
            <person name="Terryn N."/>
            <person name="Harris B."/>
            <person name="Ansorge W."/>
            <person name="Brandt P."/>
            <person name="Grivell L.A."/>
            <person name="Rieger M."/>
            <person name="Weichselgartner M."/>
            <person name="de Simone V."/>
            <person name="Obermaier B."/>
            <person name="Mache R."/>
            <person name="Mueller M."/>
            <person name="Kreis M."/>
            <person name="Delseny M."/>
            <person name="Puigdomenech P."/>
            <person name="Watson M."/>
            <person name="Schmidtheini T."/>
            <person name="Reichert B."/>
            <person name="Portetelle D."/>
            <person name="Perez-Alonso M."/>
            <person name="Boutry M."/>
            <person name="Bancroft I."/>
            <person name="Vos P."/>
            <person name="Hoheisel J."/>
            <person name="Zimmermann W."/>
            <person name="Wedler H."/>
            <person name="Ridley P."/>
            <person name="Langham S.-A."/>
            <person name="McCullagh B."/>
            <person name="Bilham L."/>
            <person name="Robben J."/>
            <person name="van der Schueren J."/>
            <person name="Grymonprez B."/>
            <person name="Chuang Y.-J."/>
            <person name="Vandenbussche F."/>
            <person name="Braeken M."/>
            <person name="Weltjens I."/>
            <person name="Voet M."/>
            <person name="Bastiaens I."/>
            <person name="Aert R."/>
            <person name="Defoor E."/>
            <person name="Weitzenegger T."/>
            <person name="Bothe G."/>
            <person name="Ramsperger U."/>
            <person name="Hilbert H."/>
            <person name="Braun M."/>
            <person name="Holzer E."/>
            <person name="Brandt A."/>
            <person name="Peters S."/>
            <person name="van Staveren M."/>
            <person name="Dirkse W."/>
            <person name="Mooijman P."/>
            <person name="Klein Lankhorst R."/>
            <person name="Rose M."/>
            <person name="Hauf J."/>
            <person name="Koetter P."/>
            <person name="Berneiser S."/>
            <person name="Hempel S."/>
            <person name="Feldpausch M."/>
            <person name="Lamberth S."/>
            <person name="Van den Daele H."/>
            <person name="De Keyser A."/>
            <person name="Buysshaert C."/>
            <person name="Gielen J."/>
            <person name="Villarroel R."/>
            <person name="De Clercq R."/>
            <person name="van Montagu M."/>
            <person name="Rogers J."/>
            <person name="Cronin A."/>
            <person name="Quail M.A."/>
            <person name="Bray-Allen S."/>
            <person name="Clark L."/>
            <person name="Doggett J."/>
            <person name="Hall S."/>
            <person name="Kay M."/>
            <person name="Lennard N."/>
            <person name="McLay K."/>
            <person name="Mayes R."/>
            <person name="Pettett A."/>
            <person name="Rajandream M.A."/>
            <person name="Lyne M."/>
            <person name="Benes V."/>
            <person name="Rechmann S."/>
            <person name="Borkova D."/>
            <person name="Bloecker H."/>
            <person name="Scharfe M."/>
            <person name="Grimm M."/>
            <person name="Loehnert T.-H."/>
            <person name="Dose S."/>
            <person name="de Haan M."/>
            <person name="Maarse A.C."/>
            <person name="Schaefer M."/>
            <person name="Mueller-Auer S."/>
            <person name="Gabel C."/>
            <person name="Fuchs M."/>
            <person name="Fartmann B."/>
            <person name="Granderath K."/>
            <person name="Dauner D."/>
            <person name="Herzl A."/>
            <person name="Neumann S."/>
            <person name="Argiriou A."/>
            <person name="Vitale D."/>
            <person name="Liguori R."/>
            <person name="Piravandi E."/>
            <person name="Massenet O."/>
            <person name="Quigley F."/>
            <person name="Clabauld G."/>
            <person name="Muendlein A."/>
            <person name="Felber R."/>
            <person name="Schnabl S."/>
            <person name="Hiller R."/>
            <person name="Schmidt W."/>
            <person name="Lecharny A."/>
            <person name="Aubourg S."/>
            <person name="Chefdor F."/>
            <person name="Cooke R."/>
            <person name="Berger C."/>
            <person name="Monfort A."/>
            <person name="Casacuberta E."/>
            <person name="Gibbons T."/>
            <person name="Weber N."/>
            <person name="Vandenbol M."/>
            <person name="Bargues M."/>
            <person name="Terol J."/>
            <person name="Torres A."/>
            <person name="Perez-Perez A."/>
            <person name="Purnelle B."/>
            <person name="Bent E."/>
            <person name="Johnson S."/>
            <person name="Tacon D."/>
            <person name="Jesse T."/>
            <person name="Heijnen L."/>
            <person name="Schwarz S."/>
            <person name="Scholler P."/>
            <person name="Heber S."/>
            <person name="Francs P."/>
            <person name="Bielke C."/>
            <person name="Frishman D."/>
            <person name="Haase D."/>
            <person name="Lemcke K."/>
            <person name="Mewes H.-W."/>
            <person name="Stocker S."/>
            <person name="Zaccaria P."/>
            <person name="Bevan M."/>
            <person name="Wilson R.K."/>
            <person name="de la Bastide M."/>
            <person name="Habermann K."/>
            <person name="Parnell L."/>
            <person name="Dedhia N."/>
            <person name="Gnoj L."/>
            <person name="Schutz K."/>
            <person name="Huang E."/>
            <person name="Spiegel L."/>
            <person name="Sekhon M."/>
            <person name="Murray J."/>
            <person name="Sheet P."/>
            <person name="Cordes M."/>
            <person name="Abu-Threideh J."/>
            <person name="Stoneking T."/>
            <person name="Kalicki J."/>
            <person name="Graves T."/>
            <person name="Harmon G."/>
            <person name="Edwards J."/>
            <person name="Latreille P."/>
            <person name="Courtney L."/>
            <person name="Cloud J."/>
            <person name="Abbott A."/>
            <person name="Scott K."/>
            <person name="Johnson D."/>
            <person name="Minx P."/>
            <person name="Bentley D."/>
            <person name="Fulton B."/>
            <person name="Miller N."/>
            <person name="Greco T."/>
            <person name="Kemp K."/>
            <person name="Kramer J."/>
            <person name="Fulton L."/>
            <person name="Mardis E."/>
            <person name="Dante M."/>
            <person name="Pepin K."/>
            <person name="Hillier L.W."/>
            <person name="Nelson J."/>
            <person name="Spieth J."/>
            <person name="Ryan E."/>
            <person name="Andrews S."/>
            <person name="Geisel C."/>
            <person name="Layman D."/>
            <person name="Du H."/>
            <person name="Ali J."/>
            <person name="Berghoff A."/>
            <person name="Jones K."/>
            <person name="Drone K."/>
            <person name="Cotton M."/>
            <person name="Joshu C."/>
            <person name="Antonoiu B."/>
            <person name="Zidanic M."/>
            <person name="Strong C."/>
            <person name="Sun H."/>
            <person name="Lamar B."/>
            <person name="Yordan C."/>
            <person name="Ma P."/>
            <person name="Zhong J."/>
            <person name="Preston R."/>
            <person name="Vil D."/>
            <person name="Shekher M."/>
            <person name="Matero A."/>
            <person name="Shah R."/>
            <person name="Swaby I.K."/>
            <person name="O'Shaughnessy A."/>
            <person name="Rodriguez M."/>
            <person name="Hoffman J."/>
            <person name="Till S."/>
            <person name="Granat S."/>
            <person name="Shohdy N."/>
            <person name="Hasegawa A."/>
            <person name="Hameed A."/>
            <person name="Lodhi M."/>
            <person name="Johnson A."/>
            <person name="Chen E."/>
            <person name="Marra M.A."/>
            <person name="Martienssen R."/>
            <person name="McCombie W.R."/>
        </authorList>
    </citation>
    <scope>NUCLEOTIDE SEQUENCE [LARGE SCALE GENOMIC DNA]</scope>
    <source>
        <strain>cv. Columbia</strain>
    </source>
</reference>
<reference key="6">
    <citation type="journal article" date="2017" name="Plant J.">
        <title>Araport11: a complete reannotation of the Arabidopsis thaliana reference genome.</title>
        <authorList>
            <person name="Cheng C.Y."/>
            <person name="Krishnakumar V."/>
            <person name="Chan A.P."/>
            <person name="Thibaud-Nissen F."/>
            <person name="Schobel S."/>
            <person name="Town C.D."/>
        </authorList>
    </citation>
    <scope>GENOME REANNOTATION</scope>
    <source>
        <strain>cv. Columbia</strain>
    </source>
</reference>
<reference key="7">
    <citation type="journal article" date="2003" name="Science">
        <title>Empirical analysis of transcriptional activity in the Arabidopsis genome.</title>
        <authorList>
            <person name="Yamada K."/>
            <person name="Lim J."/>
            <person name="Dale J.M."/>
            <person name="Chen H."/>
            <person name="Shinn P."/>
            <person name="Palm C.J."/>
            <person name="Southwick A.M."/>
            <person name="Wu H.C."/>
            <person name="Kim C.J."/>
            <person name="Nguyen M."/>
            <person name="Pham P.K."/>
            <person name="Cheuk R.F."/>
            <person name="Karlin-Newmann G."/>
            <person name="Liu S.X."/>
            <person name="Lam B."/>
            <person name="Sakano H."/>
            <person name="Wu T."/>
            <person name="Yu G."/>
            <person name="Miranda M."/>
            <person name="Quach H.L."/>
            <person name="Tripp M."/>
            <person name="Chang C.H."/>
            <person name="Lee J.M."/>
            <person name="Toriumi M.J."/>
            <person name="Chan M.M."/>
            <person name="Tang C.C."/>
            <person name="Onodera C.S."/>
            <person name="Deng J.M."/>
            <person name="Akiyama K."/>
            <person name="Ansari Y."/>
            <person name="Arakawa T."/>
            <person name="Banh J."/>
            <person name="Banno F."/>
            <person name="Bowser L."/>
            <person name="Brooks S.Y."/>
            <person name="Carninci P."/>
            <person name="Chao Q."/>
            <person name="Choy N."/>
            <person name="Enju A."/>
            <person name="Goldsmith A.D."/>
            <person name="Gurjal M."/>
            <person name="Hansen N.F."/>
            <person name="Hayashizaki Y."/>
            <person name="Johnson-Hopson C."/>
            <person name="Hsuan V.W."/>
            <person name="Iida K."/>
            <person name="Karnes M."/>
            <person name="Khan S."/>
            <person name="Koesema E."/>
            <person name="Ishida J."/>
            <person name="Jiang P.X."/>
            <person name="Jones T."/>
            <person name="Kawai J."/>
            <person name="Kamiya A."/>
            <person name="Meyers C."/>
            <person name="Nakajima M."/>
            <person name="Narusaka M."/>
            <person name="Seki M."/>
            <person name="Sakurai T."/>
            <person name="Satou M."/>
            <person name="Tamse R."/>
            <person name="Vaysberg M."/>
            <person name="Wallender E.K."/>
            <person name="Wong C."/>
            <person name="Yamamura Y."/>
            <person name="Yuan S."/>
            <person name="Shinozaki K."/>
            <person name="Davis R.W."/>
            <person name="Theologis A."/>
            <person name="Ecker J.R."/>
        </authorList>
    </citation>
    <scope>NUCLEOTIDE SEQUENCE [LARGE SCALE MRNA]</scope>
    <source>
        <strain>cv. Columbia</strain>
    </source>
</reference>
<reference key="8">
    <citation type="journal article" date="2000" name="Plant Mol. Biol.">
        <title>Localization of AtROP4 and AtROP6 and interaction with the guanine nucleotide dissociation inhibitor AtRhoGDI1 from Arabidopsis.</title>
        <authorList>
            <person name="Bischoff F."/>
            <person name="Vahlkamp L."/>
            <person name="Molendijk A.J."/>
            <person name="Palme K."/>
        </authorList>
    </citation>
    <scope>SUBCELLULAR LOCATION</scope>
    <scope>INTERACTION WITH RHO GDI-1</scope>
</reference>
<reference key="9">
    <citation type="journal article" date="2001" name="EMBO J.">
        <title>Arabidopsis thaliana Rop GTPases are localized to tips of root hairs and control polar growth.</title>
        <authorList>
            <person name="Molendijk A.J."/>
            <person name="Bischoff F."/>
            <person name="Rajendrakumar C.S.V."/>
            <person name="Friml J."/>
            <person name="Braun M."/>
            <person name="Gilroy S."/>
            <person name="Palme K."/>
        </authorList>
    </citation>
    <scope>FUNCTION</scope>
    <scope>TISSUE SPECIFICITY</scope>
</reference>
<reference key="10">
    <citation type="journal article" date="2007" name="Curr. Biol.">
        <title>A Novel ROP/RAC effector links cell polarity, root-meristem maintenance, and vesicle trafficking.</title>
        <authorList>
            <person name="Lavy M."/>
            <person name="Bloch D."/>
            <person name="Hazak O."/>
            <person name="Gutman I."/>
            <person name="Poraty L."/>
            <person name="Sorek N."/>
            <person name="Sternberg H."/>
            <person name="Yalovsky S."/>
        </authorList>
    </citation>
    <scope>INTERACTION WITH ICR1</scope>
</reference>
<reference key="11">
    <citation type="journal article" date="2007" name="Mol. Cell. Biol.">
        <title>Activation status-coupled transient S acylation determines membrane partitioning of a plant Rho-related GTPase.</title>
        <authorList>
            <person name="Sorek N."/>
            <person name="Poraty L."/>
            <person name="Sternberg H."/>
            <person name="Bar E."/>
            <person name="Lewinsohn E."/>
            <person name="Yalovsky S."/>
        </authorList>
    </citation>
    <scope>RETRACTED PAPER</scope>
</reference>
<reference key="12">
    <citation type="journal article" date="2017" name="Mol. Cell. Biol.">
        <authorList>
            <person name="Sorek N."/>
            <person name="Poraty L."/>
            <person name="Sternberg H."/>
            <person name="Bar E."/>
            <person name="Lewinsohn E."/>
            <person name="Yalovsky S."/>
        </authorList>
    </citation>
    <scope>RETRACTION NOTICE OF PUBMED:17242203</scope>
</reference>
<reference key="13">
    <citation type="journal article" date="2012" name="Curr. Biol.">
        <title>A ROP GTPase-dependent auxin signaling pathway regulates the subcellular distribution of PIN2 in Arabidopsis roots.</title>
        <authorList>
            <person name="Lin D."/>
            <person name="Nagawa S."/>
            <person name="Chen J."/>
            <person name="Cao L."/>
            <person name="Chen X."/>
            <person name="Xu T."/>
            <person name="Li H."/>
            <person name="Dhonukshe P."/>
            <person name="Yamamuro C."/>
            <person name="Friml J."/>
            <person name="Scheres B."/>
            <person name="Fu Y."/>
            <person name="Yang Z."/>
        </authorList>
    </citation>
    <scope>FUNCTION</scope>
    <scope>INTERACTION WITH SPK1</scope>
</reference>
<reference key="14">
    <citation type="journal article" date="2015" name="Nat. Plants">
        <title>Arabidopsis D6PK is a lipid domain-dependent mediator of root epidermal planar polarity.</title>
        <authorList>
            <person name="Stanislas T."/>
            <person name="Hueser A."/>
            <person name="Barbosa I.C.R."/>
            <person name="Kiefer C.S."/>
            <person name="Brackmann K."/>
            <person name="Pietra S."/>
            <person name="Gustavsson A."/>
            <person name="Zourelidou M."/>
            <person name="Schwechheimer C."/>
            <person name="Grebe M."/>
        </authorList>
    </citation>
    <scope>SUBCELLULAR LOCATION</scope>
    <source>
        <strain>cv. Columbia</strain>
    </source>
</reference>
<reference key="15">
    <citation type="journal article" date="2019" name="Development">
        <title>Rho-of-plant activated root hair formation requires Arabidopsis YIP4a/b gene function.</title>
        <authorList>
            <person name="Gendre D."/>
            <person name="Baral A."/>
            <person name="Dang X."/>
            <person name="Esnay N."/>
            <person name="Boutte Y."/>
            <person name="Stanislas T."/>
            <person name="Vain T."/>
            <person name="Claverol S."/>
            <person name="Gustavsson A."/>
            <person name="Lin D."/>
            <person name="Grebe M."/>
            <person name="Bhalerao R.P."/>
        </authorList>
    </citation>
    <scope>FUNCTION</scope>
    <scope>DISRUPTION PHENOTYPE</scope>
    <scope>DEVELOPMENTAL STAGE</scope>
    <source>
        <strain>cv. Columbia</strain>
    </source>
</reference>
<reference key="16">
    <citation type="journal article" date="2019" name="Int. J. Mol. Sci.">
        <title>Cortical microtubule organization during petal morphogenesis in Arabidopsis.</title>
        <authorList>
            <person name="Yang Y."/>
            <person name="Huang W."/>
            <person name="Wu E."/>
            <person name="Lin C."/>
            <person name="Chen B."/>
            <person name="Lin D."/>
        </authorList>
    </citation>
    <scope>FUNCTION</scope>
    <scope>DISRUPTION PHENOTYPE</scope>
    <scope>REVIEW ON ANISOTROPIC PETAL GROWTH</scope>
</reference>
<gene>
    <name evidence="16" type="primary">ARAC3</name>
    <name evidence="15" type="synonym">RAC1</name>
    <name evidence="14" type="synonym">ROP6</name>
    <name evidence="20" type="ordered locus">At4g35020</name>
    <name evidence="21" type="ORF">M4E13.80</name>
</gene>
<sequence>MSASRFIKCVTVGDGAVGKTCLLISYTSNTFPTDYVPTVFDNFSANVIVDGNTINLGLWDTAGQEDYNRLRPLSYRGADVFLLAFSLVSKASYENVSKKWVPELRHYAPGVPIILVGTKLDLRDDKQFFAEHPGAVPISTAQGEELKKLIGAPAYIECSAKTQQNVKAVFDAAIKVVLQPPKNKKKKKRKSQKGCSIL</sequence>
<accession>Q38912</accession>
<accession>P92989</accession>
<accession>Q84W42</accession>
<evidence type="ECO:0000250" key="1">
    <source>
        <dbReference type="UniProtKB" id="P61586"/>
    </source>
</evidence>
<evidence type="ECO:0000250" key="2">
    <source>
        <dbReference type="UniProtKB" id="Q38919"/>
    </source>
</evidence>
<evidence type="ECO:0000250" key="3">
    <source>
        <dbReference type="UniProtKB" id="Q38937"/>
    </source>
</evidence>
<evidence type="ECO:0000250" key="4">
    <source>
        <dbReference type="UniProtKB" id="Q92730"/>
    </source>
</evidence>
<evidence type="ECO:0000255" key="5"/>
<evidence type="ECO:0000269" key="6">
    <source>
    </source>
</evidence>
<evidence type="ECO:0000269" key="7">
    <source>
    </source>
</evidence>
<evidence type="ECO:0000269" key="8">
    <source>
    </source>
</evidence>
<evidence type="ECO:0000269" key="9">
    <source>
    </source>
</evidence>
<evidence type="ECO:0000269" key="10">
    <source>
    </source>
</evidence>
<evidence type="ECO:0000269" key="11">
    <source>
    </source>
</evidence>
<evidence type="ECO:0000269" key="12">
    <source>
    </source>
</evidence>
<evidence type="ECO:0000269" key="13">
    <source>
    </source>
</evidence>
<evidence type="ECO:0000303" key="14">
    <source>
    </source>
</evidence>
<evidence type="ECO:0000303" key="15">
    <source>
    </source>
</evidence>
<evidence type="ECO:0000303" key="16">
    <source>
    </source>
</evidence>
<evidence type="ECO:0000305" key="17"/>
<evidence type="ECO:0000305" key="18">
    <source>
    </source>
</evidence>
<evidence type="ECO:0000305" key="19">
    <source>
    </source>
</evidence>
<evidence type="ECO:0000312" key="20">
    <source>
        <dbReference type="Araport" id="AT4G35020"/>
    </source>
</evidence>
<evidence type="ECO:0000312" key="21">
    <source>
        <dbReference type="EMBL" id="CAA17767.1"/>
    </source>
</evidence>
<organism>
    <name type="scientific">Arabidopsis thaliana</name>
    <name type="common">Mouse-ear cress</name>
    <dbReference type="NCBI Taxonomy" id="3702"/>
    <lineage>
        <taxon>Eukaryota</taxon>
        <taxon>Viridiplantae</taxon>
        <taxon>Streptophyta</taxon>
        <taxon>Embryophyta</taxon>
        <taxon>Tracheophyta</taxon>
        <taxon>Spermatophyta</taxon>
        <taxon>Magnoliopsida</taxon>
        <taxon>eudicotyledons</taxon>
        <taxon>Gunneridae</taxon>
        <taxon>Pentapetalae</taxon>
        <taxon>rosids</taxon>
        <taxon>malvids</taxon>
        <taxon>Brassicales</taxon>
        <taxon>Brassicaceae</taxon>
        <taxon>Camelineae</taxon>
        <taxon>Arabidopsis</taxon>
    </lineage>
</organism>
<comment type="function">
    <text evidence="7 9 11 12">Inactive GDP-bound Rho GTPases reside in the cytosol, are found in a complex with Rho GDP-dissociation inhibitors (Rho GDIs), and are released from the GDI protein in order to translocate to membranes upon activation. Involved in cell polarity control during the actin-dependent tip growth of root hairs, thus regulating root hair length and root hair initiation (PubMed:11387211, PubMed:30770391). Contributes, in a SPK1-dependent manner, to the prevention of cortical microtubules organization into parallel arrays oriented perpendicular to the axis of cell elongation to limit anisotropic cell growth during petal development (PubMed:31623377). SPK1-dependent activation is required for auxin-mediated inhibition of PIN2 internalization during gravitropic responses (PubMed:22683260).</text>
</comment>
<comment type="subunit">
    <text evidence="6 8 9">Interacts with Rho GDP-dissociation inhibitor 1 and ICR1 (PubMed:10798620, PubMed:17493810). Binds to SPK1 when in the inactive GDP-bound form (PubMed:22683260).</text>
</comment>
<comment type="subcellular location">
    <subcellularLocation>
        <location evidence="3">Cytoplasm</location>
    </subcellularLocation>
    <subcellularLocation>
        <location evidence="6 10">Cell membrane</location>
        <topology evidence="5">Peripheral membrane protein</topology>
    </subcellularLocation>
    <text evidence="2 10">The localization to the plasma membrane requires YIP4A and YIP4B (By similarity). Accumulates in a sterol-enriched, polar membrane domain during root hair initiation (PubMed:27251533).</text>
</comment>
<comment type="tissue specificity">
    <text evidence="7 13">Ubiquitous. Preferentially expressed at the tip of root hairs.</text>
</comment>
<comment type="developmental stage">
    <text evidence="11">In root trichoblasts, accumulates into patches at the basal end of the cell before a hair bulge is visible and remain concentrated at the tip of the bulge and in the growing hair.</text>
</comment>
<comment type="disruption phenotype">
    <text evidence="11 12">Fewer and shorter root hairs (PubMed:30770391). Plants lacking both ARAC4/ROP2 and ARAC3/ROP6 exhibit long and narrow petals, as well as increased anisotropic cell expansion of petal epidermis during flower development, as a result of increased microtubule ordering in petal abaxial epidermal cells (PubMed:31623377).</text>
</comment>
<comment type="similarity">
    <text evidence="17">Belongs to the small GTPase superfamily. Rho family.</text>
</comment>
<comment type="caution">
    <text evidence="18 19">An article reported S-acylation of Cys residues that regulates localization to membranes; however, this paper was later retracted.</text>
</comment>
<protein>
    <recommendedName>
        <fullName evidence="16">Rac-like GTP-binding protein ARAC3</fullName>
        <shortName evidence="15">AtRAC1</shortName>
    </recommendedName>
    <alternativeName>
        <fullName evidence="14">GTPase protein ROP6</fullName>
    </alternativeName>
</protein>
<name>RAC3_ARATH</name>